<evidence type="ECO:0000255" key="1">
    <source>
        <dbReference type="PROSITE-ProRule" id="PRU00448"/>
    </source>
</evidence>
<evidence type="ECO:0000269" key="2">
    <source>
    </source>
</evidence>
<evidence type="ECO:0000269" key="3">
    <source>
    </source>
</evidence>
<evidence type="ECO:0000269" key="4">
    <source>
    </source>
</evidence>
<evidence type="ECO:0000305" key="5"/>
<dbReference type="EMBL" id="U15735">
    <property type="protein sequence ID" value="AAA62152.1"/>
    <property type="molecule type" value="mRNA"/>
</dbReference>
<dbReference type="EMBL" id="AE014296">
    <property type="protein sequence ID" value="AAF49082.1"/>
    <property type="molecule type" value="Genomic_DNA"/>
</dbReference>
<dbReference type="EMBL" id="AY071612">
    <property type="protein sequence ID" value="AAL49234.1"/>
    <property type="molecule type" value="mRNA"/>
</dbReference>
<dbReference type="PIR" id="A55666">
    <property type="entry name" value="A55666"/>
</dbReference>
<dbReference type="RefSeq" id="NP_788543.1">
    <property type="nucleotide sequence ID" value="NM_176365.3"/>
</dbReference>
<dbReference type="SMR" id="P42325"/>
<dbReference type="BioGRID" id="65453">
    <property type="interactions" value="53"/>
</dbReference>
<dbReference type="DIP" id="DIP-19235N"/>
<dbReference type="FunCoup" id="P42325">
    <property type="interactions" value="518"/>
</dbReference>
<dbReference type="IntAct" id="P42325">
    <property type="interactions" value="44"/>
</dbReference>
<dbReference type="STRING" id="7227.FBpp0074671"/>
<dbReference type="iPTMnet" id="P42325"/>
<dbReference type="PaxDb" id="7227-FBpp0074671"/>
<dbReference type="DNASU" id="40186"/>
<dbReference type="EnsemblMetazoa" id="FBtr0074902">
    <property type="protein sequence ID" value="FBpp0074671"/>
    <property type="gene ID" value="FBgn0013303"/>
</dbReference>
<dbReference type="GeneID" id="40186"/>
<dbReference type="KEGG" id="dme:Dmel_CG7641"/>
<dbReference type="UCSC" id="CG7641-RA">
    <property type="organism name" value="d. melanogaster"/>
</dbReference>
<dbReference type="AGR" id="FB:FBgn0013303"/>
<dbReference type="CTD" id="40186"/>
<dbReference type="FlyBase" id="FBgn0013303">
    <property type="gene designation" value="Nca"/>
</dbReference>
<dbReference type="VEuPathDB" id="VectorBase:FBgn0013303"/>
<dbReference type="eggNOG" id="KOG0044">
    <property type="taxonomic scope" value="Eukaryota"/>
</dbReference>
<dbReference type="GeneTree" id="ENSGT00940000158862"/>
<dbReference type="HOGENOM" id="CLU_072366_1_0_1"/>
<dbReference type="InParanoid" id="P42325"/>
<dbReference type="OMA" id="MGCVCMK"/>
<dbReference type="OrthoDB" id="191686at2759"/>
<dbReference type="PhylomeDB" id="P42325"/>
<dbReference type="Reactome" id="R-DME-451308">
    <property type="pathway name" value="Activation of Ca-permeable Kainate Receptor"/>
</dbReference>
<dbReference type="SignaLink" id="P42325"/>
<dbReference type="BioGRID-ORCS" id="40186">
    <property type="hits" value="1 hit in 3 CRISPR screens"/>
</dbReference>
<dbReference type="GenomeRNAi" id="40186"/>
<dbReference type="PRO" id="PR:P42325"/>
<dbReference type="Proteomes" id="UP000000803">
    <property type="component" value="Chromosome 3L"/>
</dbReference>
<dbReference type="Bgee" id="FBgn0013303">
    <property type="expression patterns" value="Expressed in T neuron T4a (Drosophila) in embryonic/larval optic lobe (Drosophila) and 207 other cell types or tissues"/>
</dbReference>
<dbReference type="GO" id="GO:0005509">
    <property type="term" value="F:calcium ion binding"/>
    <property type="evidence" value="ECO:0000314"/>
    <property type="project" value="FlyBase"/>
</dbReference>
<dbReference type="GO" id="GO:1902848">
    <property type="term" value="P:negative regulation of neuronal signal transduction"/>
    <property type="evidence" value="ECO:0000315"/>
    <property type="project" value="UniProtKB"/>
</dbReference>
<dbReference type="GO" id="GO:0045938">
    <property type="term" value="P:positive regulation of circadian sleep/wake cycle, sleep"/>
    <property type="evidence" value="ECO:0000315"/>
    <property type="project" value="UniProtKB"/>
</dbReference>
<dbReference type="GO" id="GO:0009966">
    <property type="term" value="P:regulation of signal transduction"/>
    <property type="evidence" value="ECO:0000318"/>
    <property type="project" value="GO_Central"/>
</dbReference>
<dbReference type="CDD" id="cd00051">
    <property type="entry name" value="EFh"/>
    <property type="match status" value="2"/>
</dbReference>
<dbReference type="FunFam" id="1.10.238.10:FF:000009">
    <property type="entry name" value="Visinin-like protein 1"/>
    <property type="match status" value="1"/>
</dbReference>
<dbReference type="Gene3D" id="1.10.238.10">
    <property type="entry name" value="EF-hand"/>
    <property type="match status" value="1"/>
</dbReference>
<dbReference type="InterPro" id="IPR011992">
    <property type="entry name" value="EF-hand-dom_pair"/>
</dbReference>
<dbReference type="InterPro" id="IPR018247">
    <property type="entry name" value="EF_Hand_1_Ca_BS"/>
</dbReference>
<dbReference type="InterPro" id="IPR002048">
    <property type="entry name" value="EF_hand_dom"/>
</dbReference>
<dbReference type="InterPro" id="IPR028846">
    <property type="entry name" value="Recoverin"/>
</dbReference>
<dbReference type="PANTHER" id="PTHR23055">
    <property type="entry name" value="CALCIUM BINDING PROTEINS"/>
    <property type="match status" value="1"/>
</dbReference>
<dbReference type="PANTHER" id="PTHR23055:SF178">
    <property type="entry name" value="NEUROCALCIN HOMOLOG"/>
    <property type="match status" value="1"/>
</dbReference>
<dbReference type="Pfam" id="PF00036">
    <property type="entry name" value="EF-hand_1"/>
    <property type="match status" value="1"/>
</dbReference>
<dbReference type="Pfam" id="PF13499">
    <property type="entry name" value="EF-hand_7"/>
    <property type="match status" value="1"/>
</dbReference>
<dbReference type="PRINTS" id="PR00450">
    <property type="entry name" value="RECOVERIN"/>
</dbReference>
<dbReference type="SMART" id="SM00054">
    <property type="entry name" value="EFh"/>
    <property type="match status" value="3"/>
</dbReference>
<dbReference type="SUPFAM" id="SSF47473">
    <property type="entry name" value="EF-hand"/>
    <property type="match status" value="1"/>
</dbReference>
<dbReference type="PROSITE" id="PS00018">
    <property type="entry name" value="EF_HAND_1"/>
    <property type="match status" value="3"/>
</dbReference>
<dbReference type="PROSITE" id="PS50222">
    <property type="entry name" value="EF_HAND_2"/>
    <property type="match status" value="4"/>
</dbReference>
<comment type="function">
    <text evidence="2 3 4">Calcium-binding protein that is essential for promoting night-time sleep and inhibiting nocturnal hyperactivity (PubMed:30865587, PubMed:7989365). During the night-time it promotes sleep by limiting synaptic output from arousal- and wake-promoting neurons within the C01- and A05- domains that include the mushroom body, and the antennal mechanosensory and motor center (PubMed:30865587). Regulated by the circadian clock network and light-sensing circuits that include the CRY photoreceptor; it is likely that both of these internal and external cues are required to define the temporal window (the night-time) during which this protein functions (PubMed:30865587). Inhibits the phosphorylation of rhodopsin in a calcium-dependent manner (PubMed:8626592).</text>
</comment>
<comment type="interaction">
    <interactant intactId="EBI-149848">
        <id>P42325</id>
    </interactant>
    <interactant intactId="EBI-15122292">
        <id>Q4V3Y0</id>
        <label>CG15149</label>
    </interactant>
    <organismsDiffer>false</organismsDiffer>
    <experiments>4</experiments>
</comment>
<comment type="interaction">
    <interactant intactId="EBI-149848">
        <id>P42325</id>
    </interactant>
    <interactant intactId="EBI-130463">
        <id>Q9W221</id>
        <label>Dmel\CG13510</label>
    </interactant>
    <organismsDiffer>false</organismsDiffer>
    <experiments>4</experiments>
</comment>
<comment type="interaction">
    <interactant intactId="EBI-149848">
        <id>P42325</id>
    </interactant>
    <interactant intactId="EBI-26770067">
        <id>P54192</id>
        <label>Obp19d</label>
    </interactant>
    <organismsDiffer>false</organismsDiffer>
    <experiments>4</experiments>
</comment>
<comment type="tissue specificity">
    <text evidence="3">Expressed in neuronal tissues. High level expression seen in the cortical regions of the central brain and lower levels in the lamina, the first optic lobe of the brain. It is also found in the thoracic ganglia.</text>
</comment>
<comment type="developmental stage">
    <text evidence="3">Found in the embryos, larvae and pupae. Expression in the adult heads is higher than in the bodies.</text>
</comment>
<comment type="mass spectrometry"/>
<comment type="disruption phenotype">
    <text evidence="2">Viable. Adults exhibit reduced night-time sleep but daytime sleep appears normal. RNAi-mediated knockdown in the whole organism or simultaneously knockdown in the C01 and A05 neurons, results in a similar phenotype to the genetic knockout. As demonstrated in adults undergoing RNAi-mediated knockdown in the C01 and A05 neurons, the reduction in night-time sleep and increase in night-time arousal is likely the result of enhanced neurotransmitter release in the mushroom body alpha-beta lobes, and the antennal mechanosensory and motor center, which occurs only during the dark period of different light-dark conditions. RNAi-mediated knockdown in a tim mutant background, also results in sleep loss during the dark period of different light-dark conditions but under constant light conditions sleep loss is completely suppressed. RNAi-mediated knockdown in a cry mutant background, results in a small but significant reduction in sleep under LL conditions.</text>
</comment>
<comment type="similarity">
    <text evidence="5">Belongs to the recoverin family.</text>
</comment>
<protein>
    <recommendedName>
        <fullName>Neurocalcin homolog</fullName>
        <shortName>DrosNCa</shortName>
    </recommendedName>
</protein>
<feature type="initiator methionine" description="Removed">
    <location>
        <position position="1"/>
    </location>
</feature>
<feature type="chain" id="PRO_0000073801" description="Neurocalcin homolog">
    <location>
        <begin position="2"/>
        <end position="190"/>
    </location>
</feature>
<feature type="domain" description="EF-hand 1" evidence="1">
    <location>
        <begin position="40"/>
        <end position="58"/>
    </location>
</feature>
<feature type="domain" description="EF-hand 2" evidence="1">
    <location>
        <begin position="60"/>
        <end position="95"/>
    </location>
</feature>
<feature type="domain" description="EF-hand 3" evidence="1">
    <location>
        <begin position="96"/>
        <end position="131"/>
    </location>
</feature>
<feature type="domain" description="EF-hand 4" evidence="1">
    <location>
        <begin position="144"/>
        <end position="179"/>
    </location>
</feature>
<feature type="binding site" evidence="1">
    <location>
        <position position="73"/>
    </location>
    <ligand>
        <name>Ca(2+)</name>
        <dbReference type="ChEBI" id="CHEBI:29108"/>
        <label>1</label>
    </ligand>
</feature>
<feature type="binding site" evidence="1">
    <location>
        <position position="75"/>
    </location>
    <ligand>
        <name>Ca(2+)</name>
        <dbReference type="ChEBI" id="CHEBI:29108"/>
        <label>1</label>
    </ligand>
</feature>
<feature type="binding site" evidence="1">
    <location>
        <position position="77"/>
    </location>
    <ligand>
        <name>Ca(2+)</name>
        <dbReference type="ChEBI" id="CHEBI:29108"/>
        <label>1</label>
    </ligand>
</feature>
<feature type="binding site" evidence="1">
    <location>
        <position position="79"/>
    </location>
    <ligand>
        <name>Ca(2+)</name>
        <dbReference type="ChEBI" id="CHEBI:29108"/>
        <label>1</label>
    </ligand>
</feature>
<feature type="binding site" evidence="1">
    <location>
        <position position="84"/>
    </location>
    <ligand>
        <name>Ca(2+)</name>
        <dbReference type="ChEBI" id="CHEBI:29108"/>
        <label>1</label>
    </ligand>
</feature>
<feature type="binding site" evidence="1">
    <location>
        <position position="109"/>
    </location>
    <ligand>
        <name>Ca(2+)</name>
        <dbReference type="ChEBI" id="CHEBI:29108"/>
        <label>2</label>
    </ligand>
</feature>
<feature type="binding site" evidence="1">
    <location>
        <position position="111"/>
    </location>
    <ligand>
        <name>Ca(2+)</name>
        <dbReference type="ChEBI" id="CHEBI:29108"/>
        <label>2</label>
    </ligand>
</feature>
<feature type="binding site" evidence="1">
    <location>
        <position position="113"/>
    </location>
    <ligand>
        <name>Ca(2+)</name>
        <dbReference type="ChEBI" id="CHEBI:29108"/>
        <label>2</label>
    </ligand>
</feature>
<feature type="binding site" evidence="1">
    <location>
        <position position="115"/>
    </location>
    <ligand>
        <name>Ca(2+)</name>
        <dbReference type="ChEBI" id="CHEBI:29108"/>
        <label>2</label>
    </ligand>
</feature>
<feature type="binding site" evidence="1">
    <location>
        <position position="120"/>
    </location>
    <ligand>
        <name>Ca(2+)</name>
        <dbReference type="ChEBI" id="CHEBI:29108"/>
        <label>2</label>
    </ligand>
</feature>
<feature type="binding site" evidence="1">
    <location>
        <position position="157"/>
    </location>
    <ligand>
        <name>Ca(2+)</name>
        <dbReference type="ChEBI" id="CHEBI:29108"/>
        <label>3</label>
    </ligand>
</feature>
<feature type="binding site" evidence="1">
    <location>
        <position position="159"/>
    </location>
    <ligand>
        <name>Ca(2+)</name>
        <dbReference type="ChEBI" id="CHEBI:29108"/>
        <label>3</label>
    </ligand>
</feature>
<feature type="binding site" evidence="1">
    <location>
        <position position="161"/>
    </location>
    <ligand>
        <name>Ca(2+)</name>
        <dbReference type="ChEBI" id="CHEBI:29108"/>
        <label>3</label>
    </ligand>
</feature>
<feature type="binding site" evidence="1">
    <location>
        <position position="163"/>
    </location>
    <ligand>
        <name>Ca(2+)</name>
        <dbReference type="ChEBI" id="CHEBI:29108"/>
        <label>3</label>
    </ligand>
</feature>
<feature type="binding site" evidence="1">
    <location>
        <position position="168"/>
    </location>
    <ligand>
        <name>Ca(2+)</name>
        <dbReference type="ChEBI" id="CHEBI:29108"/>
        <label>3</label>
    </ligand>
</feature>
<feature type="lipid moiety-binding region" description="N-myristoyl glycine" evidence="4">
    <location>
        <position position="2"/>
    </location>
</feature>
<accession>P42325</accession>
<accession>Q9VW67</accession>
<proteinExistence type="evidence at protein level"/>
<gene>
    <name type="primary">Nca</name>
    <name type="ORF">CG7641</name>
</gene>
<reference key="1">
    <citation type="journal article" date="1994" name="J. Biol. Chem.">
        <title>A highly conserved homologue of bovine neurocalcin in Drosophila melanogaster is a Ca(2+)-binding protein expressed in neuronal tissues.</title>
        <authorList>
            <person name="Teng D.H.-F."/>
            <person name="Chen C.-K."/>
            <person name="Hurley J.B."/>
        </authorList>
    </citation>
    <scope>NUCLEOTIDE SEQUENCE [MRNA]</scope>
    <scope>FUNCTION</scope>
    <scope>TISSUE SPECIFICITY</scope>
    <scope>DEVELOPMENTAL STAGE</scope>
    <source>
        <strain>Canton-S</strain>
    </source>
</reference>
<reference key="2">
    <citation type="journal article" date="2000" name="Science">
        <title>The genome sequence of Drosophila melanogaster.</title>
        <authorList>
            <person name="Adams M.D."/>
            <person name="Celniker S.E."/>
            <person name="Holt R.A."/>
            <person name="Evans C.A."/>
            <person name="Gocayne J.D."/>
            <person name="Amanatides P.G."/>
            <person name="Scherer S.E."/>
            <person name="Li P.W."/>
            <person name="Hoskins R.A."/>
            <person name="Galle R.F."/>
            <person name="George R.A."/>
            <person name="Lewis S.E."/>
            <person name="Richards S."/>
            <person name="Ashburner M."/>
            <person name="Henderson S.N."/>
            <person name="Sutton G.G."/>
            <person name="Wortman J.R."/>
            <person name="Yandell M.D."/>
            <person name="Zhang Q."/>
            <person name="Chen L.X."/>
            <person name="Brandon R.C."/>
            <person name="Rogers Y.-H.C."/>
            <person name="Blazej R.G."/>
            <person name="Champe M."/>
            <person name="Pfeiffer B.D."/>
            <person name="Wan K.H."/>
            <person name="Doyle C."/>
            <person name="Baxter E.G."/>
            <person name="Helt G."/>
            <person name="Nelson C.R."/>
            <person name="Miklos G.L.G."/>
            <person name="Abril J.F."/>
            <person name="Agbayani A."/>
            <person name="An H.-J."/>
            <person name="Andrews-Pfannkoch C."/>
            <person name="Baldwin D."/>
            <person name="Ballew R.M."/>
            <person name="Basu A."/>
            <person name="Baxendale J."/>
            <person name="Bayraktaroglu L."/>
            <person name="Beasley E.M."/>
            <person name="Beeson K.Y."/>
            <person name="Benos P.V."/>
            <person name="Berman B.P."/>
            <person name="Bhandari D."/>
            <person name="Bolshakov S."/>
            <person name="Borkova D."/>
            <person name="Botchan M.R."/>
            <person name="Bouck J."/>
            <person name="Brokstein P."/>
            <person name="Brottier P."/>
            <person name="Burtis K.C."/>
            <person name="Busam D.A."/>
            <person name="Butler H."/>
            <person name="Cadieu E."/>
            <person name="Center A."/>
            <person name="Chandra I."/>
            <person name="Cherry J.M."/>
            <person name="Cawley S."/>
            <person name="Dahlke C."/>
            <person name="Davenport L.B."/>
            <person name="Davies P."/>
            <person name="de Pablos B."/>
            <person name="Delcher A."/>
            <person name="Deng Z."/>
            <person name="Mays A.D."/>
            <person name="Dew I."/>
            <person name="Dietz S.M."/>
            <person name="Dodson K."/>
            <person name="Doup L.E."/>
            <person name="Downes M."/>
            <person name="Dugan-Rocha S."/>
            <person name="Dunkov B.C."/>
            <person name="Dunn P."/>
            <person name="Durbin K.J."/>
            <person name="Evangelista C.C."/>
            <person name="Ferraz C."/>
            <person name="Ferriera S."/>
            <person name="Fleischmann W."/>
            <person name="Fosler C."/>
            <person name="Gabrielian A.E."/>
            <person name="Garg N.S."/>
            <person name="Gelbart W.M."/>
            <person name="Glasser K."/>
            <person name="Glodek A."/>
            <person name="Gong F."/>
            <person name="Gorrell J.H."/>
            <person name="Gu Z."/>
            <person name="Guan P."/>
            <person name="Harris M."/>
            <person name="Harris N.L."/>
            <person name="Harvey D.A."/>
            <person name="Heiman T.J."/>
            <person name="Hernandez J.R."/>
            <person name="Houck J."/>
            <person name="Hostin D."/>
            <person name="Houston K.A."/>
            <person name="Howland T.J."/>
            <person name="Wei M.-H."/>
            <person name="Ibegwam C."/>
            <person name="Jalali M."/>
            <person name="Kalush F."/>
            <person name="Karpen G.H."/>
            <person name="Ke Z."/>
            <person name="Kennison J.A."/>
            <person name="Ketchum K.A."/>
            <person name="Kimmel B.E."/>
            <person name="Kodira C.D."/>
            <person name="Kraft C.L."/>
            <person name="Kravitz S."/>
            <person name="Kulp D."/>
            <person name="Lai Z."/>
            <person name="Lasko P."/>
            <person name="Lei Y."/>
            <person name="Levitsky A.A."/>
            <person name="Li J.H."/>
            <person name="Li Z."/>
            <person name="Liang Y."/>
            <person name="Lin X."/>
            <person name="Liu X."/>
            <person name="Mattei B."/>
            <person name="McIntosh T.C."/>
            <person name="McLeod M.P."/>
            <person name="McPherson D."/>
            <person name="Merkulov G."/>
            <person name="Milshina N.V."/>
            <person name="Mobarry C."/>
            <person name="Morris J."/>
            <person name="Moshrefi A."/>
            <person name="Mount S.M."/>
            <person name="Moy M."/>
            <person name="Murphy B."/>
            <person name="Murphy L."/>
            <person name="Muzny D.M."/>
            <person name="Nelson D.L."/>
            <person name="Nelson D.R."/>
            <person name="Nelson K.A."/>
            <person name="Nixon K."/>
            <person name="Nusskern D.R."/>
            <person name="Pacleb J.M."/>
            <person name="Palazzolo M."/>
            <person name="Pittman G.S."/>
            <person name="Pan S."/>
            <person name="Pollard J."/>
            <person name="Puri V."/>
            <person name="Reese M.G."/>
            <person name="Reinert K."/>
            <person name="Remington K."/>
            <person name="Saunders R.D.C."/>
            <person name="Scheeler F."/>
            <person name="Shen H."/>
            <person name="Shue B.C."/>
            <person name="Siden-Kiamos I."/>
            <person name="Simpson M."/>
            <person name="Skupski M.P."/>
            <person name="Smith T.J."/>
            <person name="Spier E."/>
            <person name="Spradling A.C."/>
            <person name="Stapleton M."/>
            <person name="Strong R."/>
            <person name="Sun E."/>
            <person name="Svirskas R."/>
            <person name="Tector C."/>
            <person name="Turner R."/>
            <person name="Venter E."/>
            <person name="Wang A.H."/>
            <person name="Wang X."/>
            <person name="Wang Z.-Y."/>
            <person name="Wassarman D.A."/>
            <person name="Weinstock G.M."/>
            <person name="Weissenbach J."/>
            <person name="Williams S.M."/>
            <person name="Woodage T."/>
            <person name="Worley K.C."/>
            <person name="Wu D."/>
            <person name="Yang S."/>
            <person name="Yao Q.A."/>
            <person name="Ye J."/>
            <person name="Yeh R.-F."/>
            <person name="Zaveri J.S."/>
            <person name="Zhan M."/>
            <person name="Zhang G."/>
            <person name="Zhao Q."/>
            <person name="Zheng L."/>
            <person name="Zheng X.H."/>
            <person name="Zhong F.N."/>
            <person name="Zhong W."/>
            <person name="Zhou X."/>
            <person name="Zhu S.C."/>
            <person name="Zhu X."/>
            <person name="Smith H.O."/>
            <person name="Gibbs R.A."/>
            <person name="Myers E.W."/>
            <person name="Rubin G.M."/>
            <person name="Venter J.C."/>
        </authorList>
    </citation>
    <scope>NUCLEOTIDE SEQUENCE [LARGE SCALE GENOMIC DNA]</scope>
    <source>
        <strain>Berkeley</strain>
    </source>
</reference>
<reference key="3">
    <citation type="journal article" date="2002" name="Genome Biol.">
        <title>Annotation of the Drosophila melanogaster euchromatic genome: a systematic review.</title>
        <authorList>
            <person name="Misra S."/>
            <person name="Crosby M.A."/>
            <person name="Mungall C.J."/>
            <person name="Matthews B.B."/>
            <person name="Campbell K.S."/>
            <person name="Hradecky P."/>
            <person name="Huang Y."/>
            <person name="Kaminker J.S."/>
            <person name="Millburn G.H."/>
            <person name="Prochnik S.E."/>
            <person name="Smith C.D."/>
            <person name="Tupy J.L."/>
            <person name="Whitfield E.J."/>
            <person name="Bayraktaroglu L."/>
            <person name="Berman B.P."/>
            <person name="Bettencourt B.R."/>
            <person name="Celniker S.E."/>
            <person name="de Grey A.D.N.J."/>
            <person name="Drysdale R.A."/>
            <person name="Harris N.L."/>
            <person name="Richter J."/>
            <person name="Russo S."/>
            <person name="Schroeder A.J."/>
            <person name="Shu S.Q."/>
            <person name="Stapleton M."/>
            <person name="Yamada C."/>
            <person name="Ashburner M."/>
            <person name="Gelbart W.M."/>
            <person name="Rubin G.M."/>
            <person name="Lewis S.E."/>
        </authorList>
    </citation>
    <scope>GENOME REANNOTATION</scope>
    <source>
        <strain>Berkeley</strain>
    </source>
</reference>
<reference key="4">
    <citation type="journal article" date="2002" name="Genome Biol.">
        <title>A Drosophila full-length cDNA resource.</title>
        <authorList>
            <person name="Stapleton M."/>
            <person name="Carlson J.W."/>
            <person name="Brokstein P."/>
            <person name="Yu C."/>
            <person name="Champe M."/>
            <person name="George R.A."/>
            <person name="Guarin H."/>
            <person name="Kronmiller B."/>
            <person name="Pacleb J.M."/>
            <person name="Park S."/>
            <person name="Wan K.H."/>
            <person name="Rubin G.M."/>
            <person name="Celniker S.E."/>
        </authorList>
    </citation>
    <scope>NUCLEOTIDE SEQUENCE [LARGE SCALE MRNA]</scope>
    <source>
        <strain>Berkeley</strain>
        <tissue>Embryo</tissue>
    </source>
</reference>
<reference key="5">
    <citation type="journal article" date="1996" name="J. Biol. Chem.">
        <title>Drosophila neurocalcin, a fatty acylated, Ca2+-binding protein that associates with membranes and inhibits in vitro phosphorylation of bovine rhodopsin.</title>
        <authorList>
            <person name="Faurobert E."/>
            <person name="Chen C.-K."/>
            <person name="Hurley J.B."/>
            <person name="Teng D.H.-F."/>
        </authorList>
    </citation>
    <scope>FUNCTION</scope>
    <scope>MASS SPECTROMETRY</scope>
    <scope>MYRISTOYLATION AT GLY-2</scope>
</reference>
<reference key="6">
    <citation type="journal article" date="2019" name="Elife">
        <title>Neurocalcin regulates nighttime sleep and arousal in Drosophila.</title>
        <authorList>
            <person name="Chen K.F."/>
            <person name="Lowe S."/>
            <person name="Lamaze A."/>
            <person name="Kraetschmer P."/>
            <person name="Jepson J."/>
        </authorList>
    </citation>
    <scope>FUNCTION</scope>
    <scope>DISRUPTION PHENOTYPE</scope>
</reference>
<keyword id="KW-0106">Calcium</keyword>
<keyword id="KW-0449">Lipoprotein</keyword>
<keyword id="KW-0479">Metal-binding</keyword>
<keyword id="KW-0519">Myristate</keyword>
<keyword id="KW-1185">Reference proteome</keyword>
<keyword id="KW-0677">Repeat</keyword>
<sequence>MGKQNSKLKPEVLEDLKQNTEFTDAEIQEWYKGFLKDCPSGHLSVEEFKKIYGNFFPYGDASKFAEHVFRTFDANGDGTIDFREFLCALSVTSRGKLEQKLKWAFSMYDLDGNGYISRQEMLEIVTAIYKMVGSVMKMPEDESTPEKRTDKIFRQMDRNKDGKLSLEEFIEGAKSDPSIVRLLQCDPQSH</sequence>
<organism>
    <name type="scientific">Drosophila melanogaster</name>
    <name type="common">Fruit fly</name>
    <dbReference type="NCBI Taxonomy" id="7227"/>
    <lineage>
        <taxon>Eukaryota</taxon>
        <taxon>Metazoa</taxon>
        <taxon>Ecdysozoa</taxon>
        <taxon>Arthropoda</taxon>
        <taxon>Hexapoda</taxon>
        <taxon>Insecta</taxon>
        <taxon>Pterygota</taxon>
        <taxon>Neoptera</taxon>
        <taxon>Endopterygota</taxon>
        <taxon>Diptera</taxon>
        <taxon>Brachycera</taxon>
        <taxon>Muscomorpha</taxon>
        <taxon>Ephydroidea</taxon>
        <taxon>Drosophilidae</taxon>
        <taxon>Drosophila</taxon>
        <taxon>Sophophora</taxon>
    </lineage>
</organism>
<name>NCAH_DROME</name>